<reference key="1">
    <citation type="submission" date="2008-05" db="EMBL/GenBank/DDBJ databases">
        <title>Complete genome sequence of Clostridium botulinum E3 str. Alaska E43.</title>
        <authorList>
            <person name="Brinkac L.M."/>
            <person name="Brown J.L."/>
            <person name="Bruce D."/>
            <person name="Detter C."/>
            <person name="Munk C."/>
            <person name="Smith L.A."/>
            <person name="Smith T.J."/>
            <person name="Sutton G."/>
            <person name="Brettin T.S."/>
        </authorList>
    </citation>
    <scope>NUCLEOTIDE SEQUENCE [LARGE SCALE GENOMIC DNA]</scope>
    <source>
        <strain>Alaska E43 / Type E3</strain>
    </source>
</reference>
<feature type="chain" id="PRO_1000127326" description="Large ribosomal subunit protein bL35">
    <location>
        <begin position="1"/>
        <end position="65"/>
    </location>
</feature>
<feature type="region of interest" description="Disordered" evidence="2">
    <location>
        <begin position="1"/>
        <end position="25"/>
    </location>
</feature>
<protein>
    <recommendedName>
        <fullName evidence="1">Large ribosomal subunit protein bL35</fullName>
    </recommendedName>
    <alternativeName>
        <fullName evidence="3">50S ribosomal protein L35</fullName>
    </alternativeName>
</protein>
<name>RL35_CLOBA</name>
<gene>
    <name evidence="1" type="primary">rpmI</name>
    <name type="ordered locus">CLH_2248</name>
</gene>
<dbReference type="EMBL" id="CP001078">
    <property type="protein sequence ID" value="ACD53315.1"/>
    <property type="molecule type" value="Genomic_DNA"/>
</dbReference>
<dbReference type="RefSeq" id="WP_003373773.1">
    <property type="nucleotide sequence ID" value="NC_010723.1"/>
</dbReference>
<dbReference type="SMR" id="B2V5A0"/>
<dbReference type="KEGG" id="cbt:CLH_2248"/>
<dbReference type="HOGENOM" id="CLU_169643_1_1_9"/>
<dbReference type="GO" id="GO:0022625">
    <property type="term" value="C:cytosolic large ribosomal subunit"/>
    <property type="evidence" value="ECO:0007669"/>
    <property type="project" value="TreeGrafter"/>
</dbReference>
<dbReference type="GO" id="GO:0003735">
    <property type="term" value="F:structural constituent of ribosome"/>
    <property type="evidence" value="ECO:0007669"/>
    <property type="project" value="InterPro"/>
</dbReference>
<dbReference type="GO" id="GO:0006412">
    <property type="term" value="P:translation"/>
    <property type="evidence" value="ECO:0007669"/>
    <property type="project" value="UniProtKB-UniRule"/>
</dbReference>
<dbReference type="FunFam" id="4.10.410.60:FF:000001">
    <property type="entry name" value="50S ribosomal protein L35"/>
    <property type="match status" value="1"/>
</dbReference>
<dbReference type="Gene3D" id="4.10.410.60">
    <property type="match status" value="1"/>
</dbReference>
<dbReference type="HAMAP" id="MF_00514">
    <property type="entry name" value="Ribosomal_bL35"/>
    <property type="match status" value="1"/>
</dbReference>
<dbReference type="InterPro" id="IPR001706">
    <property type="entry name" value="Ribosomal_bL35"/>
</dbReference>
<dbReference type="InterPro" id="IPR021137">
    <property type="entry name" value="Ribosomal_bL35-like"/>
</dbReference>
<dbReference type="InterPro" id="IPR018265">
    <property type="entry name" value="Ribosomal_bL35_CS"/>
</dbReference>
<dbReference type="InterPro" id="IPR037229">
    <property type="entry name" value="Ribosomal_bL35_sf"/>
</dbReference>
<dbReference type="NCBIfam" id="TIGR00001">
    <property type="entry name" value="rpmI_bact"/>
    <property type="match status" value="1"/>
</dbReference>
<dbReference type="PANTHER" id="PTHR33343">
    <property type="entry name" value="54S RIBOSOMAL PROTEIN BL35M"/>
    <property type="match status" value="1"/>
</dbReference>
<dbReference type="PANTHER" id="PTHR33343:SF1">
    <property type="entry name" value="LARGE RIBOSOMAL SUBUNIT PROTEIN BL35M"/>
    <property type="match status" value="1"/>
</dbReference>
<dbReference type="Pfam" id="PF01632">
    <property type="entry name" value="Ribosomal_L35p"/>
    <property type="match status" value="1"/>
</dbReference>
<dbReference type="PRINTS" id="PR00064">
    <property type="entry name" value="RIBOSOMALL35"/>
</dbReference>
<dbReference type="SUPFAM" id="SSF143034">
    <property type="entry name" value="L35p-like"/>
    <property type="match status" value="1"/>
</dbReference>
<dbReference type="PROSITE" id="PS00936">
    <property type="entry name" value="RIBOSOMAL_L35"/>
    <property type="match status" value="1"/>
</dbReference>
<keyword id="KW-0687">Ribonucleoprotein</keyword>
<keyword id="KW-0689">Ribosomal protein</keyword>
<accession>B2V5A0</accession>
<evidence type="ECO:0000255" key="1">
    <source>
        <dbReference type="HAMAP-Rule" id="MF_00514"/>
    </source>
</evidence>
<evidence type="ECO:0000256" key="2">
    <source>
        <dbReference type="SAM" id="MobiDB-lite"/>
    </source>
</evidence>
<evidence type="ECO:0000305" key="3"/>
<proteinExistence type="inferred from homology"/>
<sequence>MPKMKSHRGAAKRFKKTGTGKLKRAKAFKSHILTKKSPKTKRNLRKGGYVSKSEEKVMKKLLPYL</sequence>
<comment type="similarity">
    <text evidence="1">Belongs to the bacterial ribosomal protein bL35 family.</text>
</comment>
<organism>
    <name type="scientific">Clostridium botulinum (strain Alaska E43 / Type E3)</name>
    <dbReference type="NCBI Taxonomy" id="508767"/>
    <lineage>
        <taxon>Bacteria</taxon>
        <taxon>Bacillati</taxon>
        <taxon>Bacillota</taxon>
        <taxon>Clostridia</taxon>
        <taxon>Eubacteriales</taxon>
        <taxon>Clostridiaceae</taxon>
        <taxon>Clostridium</taxon>
    </lineage>
</organism>